<name>DHB13_RAT</name>
<organism>
    <name type="scientific">Rattus norvegicus</name>
    <name type="common">Rat</name>
    <dbReference type="NCBI Taxonomy" id="10116"/>
    <lineage>
        <taxon>Eukaryota</taxon>
        <taxon>Metazoa</taxon>
        <taxon>Chordata</taxon>
        <taxon>Craniata</taxon>
        <taxon>Vertebrata</taxon>
        <taxon>Euteleostomi</taxon>
        <taxon>Mammalia</taxon>
        <taxon>Eutheria</taxon>
        <taxon>Euarchontoglires</taxon>
        <taxon>Glires</taxon>
        <taxon>Rodentia</taxon>
        <taxon>Myomorpha</taxon>
        <taxon>Muroidea</taxon>
        <taxon>Muridae</taxon>
        <taxon>Murinae</taxon>
        <taxon>Rattus</taxon>
    </lineage>
</organism>
<protein>
    <recommendedName>
        <fullName evidence="2">17-beta-hydroxysteroid dehydrogenase 13</fullName>
        <shortName>17-beta-HSD 13</shortName>
        <ecNumber evidence="2">1.1.1.-</ecNumber>
        <ecNumber evidence="2">1.1.1.62</ecNumber>
    </recommendedName>
    <alternativeName>
        <fullName evidence="2">Hepatic retinol/retinal dehydrogenase</fullName>
        <ecNumber evidence="2">1.1.1.105</ecNumber>
    </alternativeName>
    <alternativeName>
        <fullName evidence="2">Short-chain dehydrogenase/reductase 9</fullName>
    </alternativeName>
</protein>
<dbReference type="EC" id="1.1.1.-" evidence="2"/>
<dbReference type="EC" id="1.1.1.62" evidence="2"/>
<dbReference type="EC" id="1.1.1.105" evidence="2"/>
<dbReference type="EMBL" id="BC088191">
    <property type="protein sequence ID" value="AAH88191.1"/>
    <property type="molecule type" value="mRNA"/>
</dbReference>
<dbReference type="RefSeq" id="NP_001009684.1">
    <property type="nucleotide sequence ID" value="NM_001009684.1"/>
</dbReference>
<dbReference type="SMR" id="Q5M875"/>
<dbReference type="FunCoup" id="Q5M875">
    <property type="interactions" value="246"/>
</dbReference>
<dbReference type="IntAct" id="Q5M875">
    <property type="interactions" value="1"/>
</dbReference>
<dbReference type="STRING" id="10116.ENSRNOP00000029333"/>
<dbReference type="iPTMnet" id="Q5M875"/>
<dbReference type="PhosphoSitePlus" id="Q5M875"/>
<dbReference type="jPOST" id="Q5M875"/>
<dbReference type="PaxDb" id="10116-ENSRNOP00000029333"/>
<dbReference type="Ensembl" id="ENSRNOT00000038188.3">
    <property type="protein sequence ID" value="ENSRNOP00000029333.2"/>
    <property type="gene ID" value="ENSRNOG00000002212.7"/>
</dbReference>
<dbReference type="GeneID" id="305150"/>
<dbReference type="KEGG" id="rno:305150"/>
<dbReference type="AGR" id="RGD:1359553"/>
<dbReference type="CTD" id="345275"/>
<dbReference type="RGD" id="1359553">
    <property type="gene designation" value="Hsd17b13"/>
</dbReference>
<dbReference type="eggNOG" id="KOG1201">
    <property type="taxonomic scope" value="Eukaryota"/>
</dbReference>
<dbReference type="GeneTree" id="ENSGT00940000161743"/>
<dbReference type="HOGENOM" id="CLU_010194_2_5_1"/>
<dbReference type="InParanoid" id="Q5M875"/>
<dbReference type="OMA" id="RWTAYEF"/>
<dbReference type="OrthoDB" id="25229at9989"/>
<dbReference type="PhylomeDB" id="Q5M875"/>
<dbReference type="TreeFam" id="TF312837"/>
<dbReference type="Reactome" id="R-RNO-8964572">
    <property type="pathway name" value="Lipid particle organization"/>
</dbReference>
<dbReference type="PRO" id="PR:Q5M875"/>
<dbReference type="Proteomes" id="UP000002494">
    <property type="component" value="Chromosome 14"/>
</dbReference>
<dbReference type="Bgee" id="ENSRNOG00000002212">
    <property type="expression patterns" value="Expressed in pancreas and 17 other cell types or tissues"/>
</dbReference>
<dbReference type="GO" id="GO:0005783">
    <property type="term" value="C:endoplasmic reticulum"/>
    <property type="evidence" value="ECO:0007669"/>
    <property type="project" value="UniProtKB-SubCell"/>
</dbReference>
<dbReference type="GO" id="GO:0005811">
    <property type="term" value="C:lipid droplet"/>
    <property type="evidence" value="ECO:0000250"/>
    <property type="project" value="UniProtKB"/>
</dbReference>
<dbReference type="GO" id="GO:0004745">
    <property type="term" value="F:all-trans-retinol dehydrogenase (NAD+) activity"/>
    <property type="evidence" value="ECO:0007669"/>
    <property type="project" value="RHEA"/>
</dbReference>
<dbReference type="GO" id="GO:0004303">
    <property type="term" value="F:estradiol 17-beta-dehydrogenase [NAD(P)+] activity"/>
    <property type="evidence" value="ECO:0007669"/>
    <property type="project" value="RHEA"/>
</dbReference>
<dbReference type="GO" id="GO:0016616">
    <property type="term" value="F:oxidoreductase activity, acting on the CH-OH group of donors, NAD or NADP as acceptor"/>
    <property type="evidence" value="ECO:0000318"/>
    <property type="project" value="GO_Central"/>
</dbReference>
<dbReference type="GO" id="GO:0016229">
    <property type="term" value="F:steroid dehydrogenase activity"/>
    <property type="evidence" value="ECO:0000318"/>
    <property type="project" value="GO_Central"/>
</dbReference>
<dbReference type="GO" id="GO:0006629">
    <property type="term" value="P:lipid metabolic process"/>
    <property type="evidence" value="ECO:0007669"/>
    <property type="project" value="UniProtKB-KW"/>
</dbReference>
<dbReference type="GO" id="GO:0046889">
    <property type="term" value="P:positive regulation of lipid biosynthetic process"/>
    <property type="evidence" value="ECO:0000266"/>
    <property type="project" value="RGD"/>
</dbReference>
<dbReference type="CDD" id="cd05339">
    <property type="entry name" value="17beta-HSDXI-like_SDR_c"/>
    <property type="match status" value="1"/>
</dbReference>
<dbReference type="FunFam" id="3.40.50.720:FF:000224">
    <property type="entry name" value="Hydroxysteroid 17-beta dehydrogenase 11"/>
    <property type="match status" value="1"/>
</dbReference>
<dbReference type="Gene3D" id="3.40.50.720">
    <property type="entry name" value="NAD(P)-binding Rossmann-like Domain"/>
    <property type="match status" value="1"/>
</dbReference>
<dbReference type="InterPro" id="IPR036291">
    <property type="entry name" value="NAD(P)-bd_dom_sf"/>
</dbReference>
<dbReference type="InterPro" id="IPR002347">
    <property type="entry name" value="SDR_fam"/>
</dbReference>
<dbReference type="PANTHER" id="PTHR24322:SF499">
    <property type="entry name" value="17-BETA-HYDROXYSTEROID DEHYDROGENASE 13"/>
    <property type="match status" value="1"/>
</dbReference>
<dbReference type="PANTHER" id="PTHR24322">
    <property type="entry name" value="PKSB"/>
    <property type="match status" value="1"/>
</dbReference>
<dbReference type="Pfam" id="PF00106">
    <property type="entry name" value="adh_short"/>
    <property type="match status" value="1"/>
</dbReference>
<dbReference type="PRINTS" id="PR00081">
    <property type="entry name" value="GDHRDH"/>
</dbReference>
<dbReference type="PRINTS" id="PR00080">
    <property type="entry name" value="SDRFAMILY"/>
</dbReference>
<dbReference type="SUPFAM" id="SSF51735">
    <property type="entry name" value="NAD(P)-binding Rossmann-fold domains"/>
    <property type="match status" value="1"/>
</dbReference>
<sequence length="300" mass="33494">MNLILELLLLVGIIIYSYLESLVKFFIPQRRKSVAGQTVLITGAGHGIGRLTAYEFAKQKSRLVLWDISKHGVEETAAKCRKLGAVVHVFVVDCSNRAEIYKSVDQVKKEVGDIEIVVNNAGAIYPADLLSTKDEEITKTFEVNILGHFWIIKALLPSMLRRNSGHIVTVASVCGHRVIPYLIPYCSSKFAAVGFHRALTAELDTLGKTGIKTSCLCPVFVNTGFTKNPSTRLWPVLEPDEVARSLIDGILTNKKMIFVPSYINISLIVEMFFPERVLKAINRIQNIQFEAIVGHRTKRK</sequence>
<keyword id="KW-0007">Acetylation</keyword>
<keyword id="KW-0256">Endoplasmic reticulum</keyword>
<keyword id="KW-0551">Lipid droplet</keyword>
<keyword id="KW-0443">Lipid metabolism</keyword>
<keyword id="KW-0521">NADP</keyword>
<keyword id="KW-0560">Oxidoreductase</keyword>
<keyword id="KW-0597">Phosphoprotein</keyword>
<keyword id="KW-1185">Reference proteome</keyword>
<keyword id="KW-0732">Signal</keyword>
<accession>Q5M875</accession>
<comment type="function">
    <text evidence="2">Plays a pivotal role in hepatic lipid metabolism. In vitro, it catalyzes the oxidation of a variety of lipid substrates, including 17beta-estradiol, retinol, retinal, and leukotriene B4.</text>
</comment>
<comment type="catalytic activity">
    <reaction evidence="2">
        <text>17beta-estradiol + NAD(+) = estrone + NADH + H(+)</text>
        <dbReference type="Rhea" id="RHEA:24612"/>
        <dbReference type="ChEBI" id="CHEBI:15378"/>
        <dbReference type="ChEBI" id="CHEBI:16469"/>
        <dbReference type="ChEBI" id="CHEBI:17263"/>
        <dbReference type="ChEBI" id="CHEBI:57540"/>
        <dbReference type="ChEBI" id="CHEBI:57945"/>
        <dbReference type="EC" id="1.1.1.62"/>
    </reaction>
</comment>
<comment type="catalytic activity">
    <reaction evidence="2">
        <text>all-trans-retinol + NAD(+) = all-trans-retinal + NADH + H(+)</text>
        <dbReference type="Rhea" id="RHEA:21284"/>
        <dbReference type="ChEBI" id="CHEBI:15378"/>
        <dbReference type="ChEBI" id="CHEBI:17336"/>
        <dbReference type="ChEBI" id="CHEBI:17898"/>
        <dbReference type="ChEBI" id="CHEBI:57540"/>
        <dbReference type="ChEBI" id="CHEBI:57945"/>
        <dbReference type="EC" id="1.1.1.105"/>
    </reaction>
</comment>
<comment type="catalytic activity">
    <reaction evidence="2">
        <text>all-trans-retinal + NAD(+) + H2O = all-trans-retinoate + NADH + 2 H(+)</text>
        <dbReference type="Rhea" id="RHEA:42080"/>
        <dbReference type="ChEBI" id="CHEBI:15377"/>
        <dbReference type="ChEBI" id="CHEBI:15378"/>
        <dbReference type="ChEBI" id="CHEBI:17898"/>
        <dbReference type="ChEBI" id="CHEBI:35291"/>
        <dbReference type="ChEBI" id="CHEBI:57540"/>
        <dbReference type="ChEBI" id="CHEBI:57945"/>
    </reaction>
</comment>
<comment type="subcellular location">
    <subcellularLocation>
        <location evidence="2">Lipid droplet</location>
    </subcellularLocation>
    <subcellularLocation>
        <location evidence="3">Endoplasmic reticulum</location>
    </subcellularLocation>
    <text evidence="3">Redistributed from the endoplasmic reticulum to lipids droplets in the cell upon induction of lipids droplet formation.</text>
</comment>
<comment type="similarity">
    <text evidence="5">Belongs to the short-chain dehydrogenases/reductases (SDR) family.</text>
</comment>
<evidence type="ECO:0000250" key="1"/>
<evidence type="ECO:0000250" key="2">
    <source>
        <dbReference type="UniProtKB" id="Q7Z5P4"/>
    </source>
</evidence>
<evidence type="ECO:0000250" key="3">
    <source>
        <dbReference type="UniProtKB" id="Q8VCR2"/>
    </source>
</evidence>
<evidence type="ECO:0000255" key="4"/>
<evidence type="ECO:0000305" key="5"/>
<evidence type="ECO:0007744" key="6">
    <source>
    </source>
</evidence>
<feature type="signal peptide" evidence="4">
    <location>
        <begin position="1"/>
        <end position="19"/>
    </location>
</feature>
<feature type="chain" id="PRO_0000042585" description="17-beta-hydroxysteroid dehydrogenase 13">
    <location>
        <begin position="20"/>
        <end position="300"/>
    </location>
</feature>
<feature type="active site" description="Proton acceptor" evidence="1">
    <location>
        <position position="185"/>
    </location>
</feature>
<feature type="binding site" evidence="1">
    <location>
        <begin position="40"/>
        <end position="67"/>
    </location>
    <ligand>
        <name>NAD(+)</name>
        <dbReference type="ChEBI" id="CHEBI:57540"/>
    </ligand>
</feature>
<feature type="binding site" evidence="1">
    <location>
        <position position="172"/>
    </location>
    <ligand>
        <name>substrate</name>
    </ligand>
</feature>
<feature type="binding site" evidence="1">
    <location>
        <position position="189"/>
    </location>
    <ligand>
        <name>NAD(+)</name>
        <dbReference type="ChEBI" id="CHEBI:57540"/>
    </ligand>
</feature>
<feature type="modified residue" description="Phosphoserine" evidence="6">
    <location>
        <position position="33"/>
    </location>
</feature>
<feature type="modified residue" description="Phosphoserine" evidence="6">
    <location>
        <position position="69"/>
    </location>
</feature>
<feature type="modified residue" description="N6-acetyllysine" evidence="3">
    <location>
        <position position="79"/>
    </location>
</feature>
<gene>
    <name type="primary">Hsd17b13</name>
    <name type="synonym">Scdr9</name>
</gene>
<reference key="1">
    <citation type="journal article" date="2004" name="Genome Res.">
        <title>The status, quality, and expansion of the NIH full-length cDNA project: the Mammalian Gene Collection (MGC).</title>
        <authorList>
            <consortium name="The MGC Project Team"/>
        </authorList>
    </citation>
    <scope>NUCLEOTIDE SEQUENCE [LARGE SCALE MRNA]</scope>
    <source>
        <tissue>Liver</tissue>
    </source>
</reference>
<reference key="2">
    <citation type="journal article" date="2012" name="Nat. Commun.">
        <title>Quantitative maps of protein phosphorylation sites across 14 different rat organs and tissues.</title>
        <authorList>
            <person name="Lundby A."/>
            <person name="Secher A."/>
            <person name="Lage K."/>
            <person name="Nordsborg N.B."/>
            <person name="Dmytriyev A."/>
            <person name="Lundby C."/>
            <person name="Olsen J.V."/>
        </authorList>
    </citation>
    <scope>PHOSPHORYLATION [LARGE SCALE ANALYSIS] AT SER-33 AND SER-69</scope>
    <scope>IDENTIFICATION BY MASS SPECTROMETRY [LARGE SCALE ANALYSIS]</scope>
</reference>
<proteinExistence type="evidence at protein level"/>